<reference key="1">
    <citation type="submission" date="2006-06" db="EMBL/GenBank/DDBJ databases">
        <title>Complete sequence of Pseudoalteromonas atlantica T6c.</title>
        <authorList>
            <consortium name="US DOE Joint Genome Institute"/>
            <person name="Copeland A."/>
            <person name="Lucas S."/>
            <person name="Lapidus A."/>
            <person name="Barry K."/>
            <person name="Detter J.C."/>
            <person name="Glavina del Rio T."/>
            <person name="Hammon N."/>
            <person name="Israni S."/>
            <person name="Dalin E."/>
            <person name="Tice H."/>
            <person name="Pitluck S."/>
            <person name="Saunders E."/>
            <person name="Brettin T."/>
            <person name="Bruce D."/>
            <person name="Han C."/>
            <person name="Tapia R."/>
            <person name="Gilna P."/>
            <person name="Schmutz J."/>
            <person name="Larimer F."/>
            <person name="Land M."/>
            <person name="Hauser L."/>
            <person name="Kyrpides N."/>
            <person name="Kim E."/>
            <person name="Karls A.C."/>
            <person name="Bartlett D."/>
            <person name="Higgins B.P."/>
            <person name="Richardson P."/>
        </authorList>
    </citation>
    <scope>NUCLEOTIDE SEQUENCE [LARGE SCALE GENOMIC DNA]</scope>
    <source>
        <strain>T6c / ATCC BAA-1087</strain>
    </source>
</reference>
<proteinExistence type="inferred from homology"/>
<keyword id="KW-0963">Cytoplasm</keyword>
<keyword id="KW-0489">Methyltransferase</keyword>
<keyword id="KW-0694">RNA-binding</keyword>
<keyword id="KW-0698">rRNA processing</keyword>
<keyword id="KW-0949">S-adenosyl-L-methionine</keyword>
<keyword id="KW-0808">Transferase</keyword>
<sequence>MSSRVTLHPGREKSLLRRHPWIFASAIESTKGRMNLGDTVDVYSHEDVWLGRGAYSPHSQIQVRIWTFTQNESVDNGFFQRRIARAQQSREELIERHGLTGYRLIAAESDGLPGVTIDVYANVIVCQLLSAGADKHREKIVWALKAQFPEHGIYERSDVAVRKKEGLEEITQVLAGDIPDEVIIEENGVKIIVNVKQGHKTGFYLDQRDNRAIAAQYAKDRDVLNCFCYTGTFGSYALAAGACSVTSLDVSDLALETAKRNVDINQLDSSKCEFINHDVFQALRDYKAQSKQFSQIILDPPKFVDSKASLNRACRGYKDINMLAMQIMAPGGILATFSCSGLMPFDLFQKVVADAALDAGREVQIIQRLSQAPDHPVSTNYPEGFYLKGLICKVL</sequence>
<name>RLMI_PSEA6</name>
<feature type="chain" id="PRO_0000366237" description="Ribosomal RNA large subunit methyltransferase I">
    <location>
        <begin position="1"/>
        <end position="395"/>
    </location>
</feature>
<feature type="domain" description="PUA" evidence="1">
    <location>
        <begin position="2"/>
        <end position="79"/>
    </location>
</feature>
<accession>Q15TV2</accession>
<protein>
    <recommendedName>
        <fullName evidence="1">Ribosomal RNA large subunit methyltransferase I</fullName>
        <ecNumber evidence="1">2.1.1.191</ecNumber>
    </recommendedName>
    <alternativeName>
        <fullName evidence="1">23S rRNA m5C1962 methyltransferase</fullName>
    </alternativeName>
    <alternativeName>
        <fullName evidence="1">rRNA (cytosine-C(5)-)-methyltransferase RlmI</fullName>
    </alternativeName>
</protein>
<organism>
    <name type="scientific">Pseudoalteromonas atlantica (strain T6c / ATCC BAA-1087)</name>
    <dbReference type="NCBI Taxonomy" id="3042615"/>
    <lineage>
        <taxon>Bacteria</taxon>
        <taxon>Pseudomonadati</taxon>
        <taxon>Pseudomonadota</taxon>
        <taxon>Gammaproteobacteria</taxon>
        <taxon>Alteromonadales</taxon>
        <taxon>Alteromonadaceae</taxon>
        <taxon>Paraglaciecola</taxon>
    </lineage>
</organism>
<dbReference type="EC" id="2.1.1.191" evidence="1"/>
<dbReference type="EMBL" id="CP000388">
    <property type="protein sequence ID" value="ABG40686.1"/>
    <property type="molecule type" value="Genomic_DNA"/>
</dbReference>
<dbReference type="RefSeq" id="WP_011574971.1">
    <property type="nucleotide sequence ID" value="NC_008228.1"/>
</dbReference>
<dbReference type="SMR" id="Q15TV2"/>
<dbReference type="STRING" id="342610.Patl_2168"/>
<dbReference type="KEGG" id="pat:Patl_2168"/>
<dbReference type="eggNOG" id="COG1092">
    <property type="taxonomic scope" value="Bacteria"/>
</dbReference>
<dbReference type="HOGENOM" id="CLU_014042_0_0_6"/>
<dbReference type="OrthoDB" id="9805492at2"/>
<dbReference type="Proteomes" id="UP000001981">
    <property type="component" value="Chromosome"/>
</dbReference>
<dbReference type="GO" id="GO:0005737">
    <property type="term" value="C:cytoplasm"/>
    <property type="evidence" value="ECO:0007669"/>
    <property type="project" value="UniProtKB-SubCell"/>
</dbReference>
<dbReference type="GO" id="GO:0003723">
    <property type="term" value="F:RNA binding"/>
    <property type="evidence" value="ECO:0007669"/>
    <property type="project" value="UniProtKB-KW"/>
</dbReference>
<dbReference type="GO" id="GO:0016434">
    <property type="term" value="F:rRNA (cytosine) methyltransferase activity"/>
    <property type="evidence" value="ECO:0007669"/>
    <property type="project" value="UniProtKB-UniRule"/>
</dbReference>
<dbReference type="CDD" id="cd02440">
    <property type="entry name" value="AdoMet_MTases"/>
    <property type="match status" value="1"/>
</dbReference>
<dbReference type="CDD" id="cd21153">
    <property type="entry name" value="PUA_RlmI"/>
    <property type="match status" value="1"/>
</dbReference>
<dbReference type="CDD" id="cd11572">
    <property type="entry name" value="RlmI_M_like"/>
    <property type="match status" value="1"/>
</dbReference>
<dbReference type="Gene3D" id="2.30.130.10">
    <property type="entry name" value="PUA domain"/>
    <property type="match status" value="1"/>
</dbReference>
<dbReference type="Gene3D" id="3.30.750.80">
    <property type="entry name" value="RNA methyltransferase domain (HRMD) like"/>
    <property type="match status" value="1"/>
</dbReference>
<dbReference type="Gene3D" id="3.40.50.150">
    <property type="entry name" value="Vaccinia Virus protein VP39"/>
    <property type="match status" value="1"/>
</dbReference>
<dbReference type="HAMAP" id="MF_01857">
    <property type="entry name" value="23SrRNA_methyltr_I"/>
    <property type="match status" value="1"/>
</dbReference>
<dbReference type="InterPro" id="IPR002478">
    <property type="entry name" value="PUA"/>
</dbReference>
<dbReference type="InterPro" id="IPR015947">
    <property type="entry name" value="PUA-like_sf"/>
</dbReference>
<dbReference type="InterPro" id="IPR036974">
    <property type="entry name" value="PUA_sf"/>
</dbReference>
<dbReference type="InterPro" id="IPR023542">
    <property type="entry name" value="RLMI"/>
</dbReference>
<dbReference type="InterPro" id="IPR041532">
    <property type="entry name" value="RlmI-like_PUA"/>
</dbReference>
<dbReference type="InterPro" id="IPR019614">
    <property type="entry name" value="SAM-dep_methyl-trfase"/>
</dbReference>
<dbReference type="InterPro" id="IPR029063">
    <property type="entry name" value="SAM-dependent_MTases_sf"/>
</dbReference>
<dbReference type="PANTHER" id="PTHR42873">
    <property type="entry name" value="RIBOSOMAL RNA LARGE SUBUNIT METHYLTRANSFERASE"/>
    <property type="match status" value="1"/>
</dbReference>
<dbReference type="PANTHER" id="PTHR42873:SF1">
    <property type="entry name" value="S-ADENOSYLMETHIONINE-DEPENDENT METHYLTRANSFERASE DOMAIN-CONTAINING PROTEIN"/>
    <property type="match status" value="1"/>
</dbReference>
<dbReference type="Pfam" id="PF10672">
    <property type="entry name" value="Methyltrans_SAM"/>
    <property type="match status" value="1"/>
</dbReference>
<dbReference type="Pfam" id="PF17785">
    <property type="entry name" value="PUA_3"/>
    <property type="match status" value="1"/>
</dbReference>
<dbReference type="SMART" id="SM00359">
    <property type="entry name" value="PUA"/>
    <property type="match status" value="1"/>
</dbReference>
<dbReference type="SUPFAM" id="SSF88697">
    <property type="entry name" value="PUA domain-like"/>
    <property type="match status" value="1"/>
</dbReference>
<dbReference type="SUPFAM" id="SSF53335">
    <property type="entry name" value="S-adenosyl-L-methionine-dependent methyltransferases"/>
    <property type="match status" value="1"/>
</dbReference>
<dbReference type="PROSITE" id="PS50890">
    <property type="entry name" value="PUA"/>
    <property type="match status" value="1"/>
</dbReference>
<comment type="function">
    <text evidence="1">Specifically methylates the cytosine at position 1962 (m5C1962) of 23S rRNA.</text>
</comment>
<comment type="catalytic activity">
    <reaction evidence="1">
        <text>cytidine(1962) in 23S rRNA + S-adenosyl-L-methionine = 5-methylcytidine(1962) in 23S rRNA + S-adenosyl-L-homocysteine + H(+)</text>
        <dbReference type="Rhea" id="RHEA:42912"/>
        <dbReference type="Rhea" id="RHEA-COMP:10382"/>
        <dbReference type="Rhea" id="RHEA-COMP:10386"/>
        <dbReference type="ChEBI" id="CHEBI:15378"/>
        <dbReference type="ChEBI" id="CHEBI:57856"/>
        <dbReference type="ChEBI" id="CHEBI:59789"/>
        <dbReference type="ChEBI" id="CHEBI:74483"/>
        <dbReference type="ChEBI" id="CHEBI:82748"/>
        <dbReference type="EC" id="2.1.1.191"/>
    </reaction>
</comment>
<comment type="subcellular location">
    <subcellularLocation>
        <location evidence="1">Cytoplasm</location>
    </subcellularLocation>
</comment>
<comment type="similarity">
    <text evidence="1">Belongs to the methyltransferase superfamily. RlmI family.</text>
</comment>
<evidence type="ECO:0000255" key="1">
    <source>
        <dbReference type="HAMAP-Rule" id="MF_01857"/>
    </source>
</evidence>
<gene>
    <name evidence="1" type="primary">rlmI</name>
    <name type="ordered locus">Patl_2168</name>
</gene>